<keyword id="KW-1185">Reference proteome</keyword>
<keyword id="KW-0687">Ribonucleoprotein</keyword>
<keyword id="KW-0689">Ribosomal protein</keyword>
<proteinExistence type="inferred from homology"/>
<evidence type="ECO:0000255" key="1">
    <source>
        <dbReference type="HAMAP-Rule" id="MF_00358"/>
    </source>
</evidence>
<evidence type="ECO:0000305" key="2"/>
<dbReference type="EMBL" id="CP001089">
    <property type="protein sequence ID" value="ACD94739.1"/>
    <property type="molecule type" value="Genomic_DNA"/>
</dbReference>
<dbReference type="RefSeq" id="WP_012469089.1">
    <property type="nucleotide sequence ID" value="NC_010814.1"/>
</dbReference>
<dbReference type="SMR" id="B3E615"/>
<dbReference type="STRING" id="398767.Glov_1016"/>
<dbReference type="KEGG" id="glo:Glov_1016"/>
<dbReference type="eggNOG" id="COG0828">
    <property type="taxonomic scope" value="Bacteria"/>
</dbReference>
<dbReference type="HOGENOM" id="CLU_159258_1_2_7"/>
<dbReference type="OrthoDB" id="9799244at2"/>
<dbReference type="Proteomes" id="UP000002420">
    <property type="component" value="Chromosome"/>
</dbReference>
<dbReference type="GO" id="GO:1990904">
    <property type="term" value="C:ribonucleoprotein complex"/>
    <property type="evidence" value="ECO:0007669"/>
    <property type="project" value="UniProtKB-KW"/>
</dbReference>
<dbReference type="GO" id="GO:0005840">
    <property type="term" value="C:ribosome"/>
    <property type="evidence" value="ECO:0007669"/>
    <property type="project" value="UniProtKB-KW"/>
</dbReference>
<dbReference type="GO" id="GO:0003735">
    <property type="term" value="F:structural constituent of ribosome"/>
    <property type="evidence" value="ECO:0007669"/>
    <property type="project" value="InterPro"/>
</dbReference>
<dbReference type="GO" id="GO:0006412">
    <property type="term" value="P:translation"/>
    <property type="evidence" value="ECO:0007669"/>
    <property type="project" value="UniProtKB-UniRule"/>
</dbReference>
<dbReference type="Gene3D" id="1.20.5.1150">
    <property type="entry name" value="Ribosomal protein S8"/>
    <property type="match status" value="1"/>
</dbReference>
<dbReference type="HAMAP" id="MF_00358">
    <property type="entry name" value="Ribosomal_bS21"/>
    <property type="match status" value="1"/>
</dbReference>
<dbReference type="InterPro" id="IPR001911">
    <property type="entry name" value="Ribosomal_bS21"/>
</dbReference>
<dbReference type="InterPro" id="IPR038380">
    <property type="entry name" value="Ribosomal_bS21_sf"/>
</dbReference>
<dbReference type="NCBIfam" id="TIGR00030">
    <property type="entry name" value="S21p"/>
    <property type="match status" value="1"/>
</dbReference>
<dbReference type="PANTHER" id="PTHR21109">
    <property type="entry name" value="MITOCHONDRIAL 28S RIBOSOMAL PROTEIN S21"/>
    <property type="match status" value="1"/>
</dbReference>
<dbReference type="PANTHER" id="PTHR21109:SF22">
    <property type="entry name" value="SMALL RIBOSOMAL SUBUNIT PROTEIN BS21"/>
    <property type="match status" value="1"/>
</dbReference>
<dbReference type="Pfam" id="PF01165">
    <property type="entry name" value="Ribosomal_S21"/>
    <property type="match status" value="1"/>
</dbReference>
<dbReference type="PRINTS" id="PR00976">
    <property type="entry name" value="RIBOSOMALS21"/>
</dbReference>
<organism>
    <name type="scientific">Trichlorobacter lovleyi (strain ATCC BAA-1151 / DSM 17278 / SZ)</name>
    <name type="common">Geobacter lovleyi</name>
    <dbReference type="NCBI Taxonomy" id="398767"/>
    <lineage>
        <taxon>Bacteria</taxon>
        <taxon>Pseudomonadati</taxon>
        <taxon>Thermodesulfobacteriota</taxon>
        <taxon>Desulfuromonadia</taxon>
        <taxon>Geobacterales</taxon>
        <taxon>Geobacteraceae</taxon>
        <taxon>Trichlorobacter</taxon>
    </lineage>
</organism>
<feature type="chain" id="PRO_1000120625" description="Small ribosomal subunit protein bS21">
    <location>
        <begin position="1"/>
        <end position="65"/>
    </location>
</feature>
<protein>
    <recommendedName>
        <fullName evidence="1">Small ribosomal subunit protein bS21</fullName>
    </recommendedName>
    <alternativeName>
        <fullName evidence="2">30S ribosomal protein S21</fullName>
    </alternativeName>
</protein>
<name>RS21_TRIL1</name>
<sequence length="65" mass="7766">MPGVRIRENEPFDLALKKFKKQCEKAGILSEVRKREHYEKPSIKRKKKAIAARKRALKKQRKMMD</sequence>
<comment type="similarity">
    <text evidence="1">Belongs to the bacterial ribosomal protein bS21 family.</text>
</comment>
<reference key="1">
    <citation type="submission" date="2008-05" db="EMBL/GenBank/DDBJ databases">
        <title>Complete sequence of chromosome of Geobacter lovleyi SZ.</title>
        <authorList>
            <consortium name="US DOE Joint Genome Institute"/>
            <person name="Lucas S."/>
            <person name="Copeland A."/>
            <person name="Lapidus A."/>
            <person name="Glavina del Rio T."/>
            <person name="Dalin E."/>
            <person name="Tice H."/>
            <person name="Bruce D."/>
            <person name="Goodwin L."/>
            <person name="Pitluck S."/>
            <person name="Chertkov O."/>
            <person name="Meincke L."/>
            <person name="Brettin T."/>
            <person name="Detter J.C."/>
            <person name="Han C."/>
            <person name="Tapia R."/>
            <person name="Kuske C.R."/>
            <person name="Schmutz J."/>
            <person name="Larimer F."/>
            <person name="Land M."/>
            <person name="Hauser L."/>
            <person name="Kyrpides N."/>
            <person name="Mikhailova N."/>
            <person name="Sung Y."/>
            <person name="Fletcher K.E."/>
            <person name="Ritalahti K.M."/>
            <person name="Loeffler F.E."/>
            <person name="Richardson P."/>
        </authorList>
    </citation>
    <scope>NUCLEOTIDE SEQUENCE [LARGE SCALE GENOMIC DNA]</scope>
    <source>
        <strain>ATCC BAA-1151 / DSM 17278 / SZ</strain>
    </source>
</reference>
<accession>B3E615</accession>
<gene>
    <name evidence="1" type="primary">rpsU</name>
    <name type="ordered locus">Glov_1016</name>
</gene>